<dbReference type="EMBL" id="CP001132">
    <property type="protein sequence ID" value="ACH84668.1"/>
    <property type="molecule type" value="Genomic_DNA"/>
</dbReference>
<dbReference type="RefSeq" id="WP_009564594.1">
    <property type="nucleotide sequence ID" value="NC_011206.1"/>
</dbReference>
<dbReference type="SMR" id="B5EPC7"/>
<dbReference type="GeneID" id="65281879"/>
<dbReference type="KEGG" id="afe:Lferr_2473"/>
<dbReference type="eggNOG" id="COG0335">
    <property type="taxonomic scope" value="Bacteria"/>
</dbReference>
<dbReference type="HOGENOM" id="CLU_103507_2_1_6"/>
<dbReference type="GO" id="GO:0022625">
    <property type="term" value="C:cytosolic large ribosomal subunit"/>
    <property type="evidence" value="ECO:0007669"/>
    <property type="project" value="TreeGrafter"/>
</dbReference>
<dbReference type="GO" id="GO:0003735">
    <property type="term" value="F:structural constituent of ribosome"/>
    <property type="evidence" value="ECO:0007669"/>
    <property type="project" value="InterPro"/>
</dbReference>
<dbReference type="GO" id="GO:0006412">
    <property type="term" value="P:translation"/>
    <property type="evidence" value="ECO:0007669"/>
    <property type="project" value="UniProtKB-UniRule"/>
</dbReference>
<dbReference type="FunFam" id="2.30.30.790:FF:000001">
    <property type="entry name" value="50S ribosomal protein L19"/>
    <property type="match status" value="1"/>
</dbReference>
<dbReference type="Gene3D" id="2.30.30.790">
    <property type="match status" value="1"/>
</dbReference>
<dbReference type="HAMAP" id="MF_00402">
    <property type="entry name" value="Ribosomal_bL19"/>
    <property type="match status" value="1"/>
</dbReference>
<dbReference type="InterPro" id="IPR001857">
    <property type="entry name" value="Ribosomal_bL19"/>
</dbReference>
<dbReference type="InterPro" id="IPR018257">
    <property type="entry name" value="Ribosomal_bL19_CS"/>
</dbReference>
<dbReference type="InterPro" id="IPR038657">
    <property type="entry name" value="Ribosomal_bL19_sf"/>
</dbReference>
<dbReference type="InterPro" id="IPR008991">
    <property type="entry name" value="Translation_prot_SH3-like_sf"/>
</dbReference>
<dbReference type="NCBIfam" id="TIGR01024">
    <property type="entry name" value="rplS_bact"/>
    <property type="match status" value="1"/>
</dbReference>
<dbReference type="PANTHER" id="PTHR15680:SF9">
    <property type="entry name" value="LARGE RIBOSOMAL SUBUNIT PROTEIN BL19M"/>
    <property type="match status" value="1"/>
</dbReference>
<dbReference type="PANTHER" id="PTHR15680">
    <property type="entry name" value="RIBOSOMAL PROTEIN L19"/>
    <property type="match status" value="1"/>
</dbReference>
<dbReference type="Pfam" id="PF01245">
    <property type="entry name" value="Ribosomal_L19"/>
    <property type="match status" value="1"/>
</dbReference>
<dbReference type="PIRSF" id="PIRSF002191">
    <property type="entry name" value="Ribosomal_L19"/>
    <property type="match status" value="1"/>
</dbReference>
<dbReference type="PRINTS" id="PR00061">
    <property type="entry name" value="RIBOSOMALL19"/>
</dbReference>
<dbReference type="SUPFAM" id="SSF50104">
    <property type="entry name" value="Translation proteins SH3-like domain"/>
    <property type="match status" value="1"/>
</dbReference>
<dbReference type="PROSITE" id="PS01015">
    <property type="entry name" value="RIBOSOMAL_L19"/>
    <property type="match status" value="1"/>
</dbReference>
<proteinExistence type="inferred from homology"/>
<evidence type="ECO:0000255" key="1">
    <source>
        <dbReference type="HAMAP-Rule" id="MF_00402"/>
    </source>
</evidence>
<evidence type="ECO:0000305" key="2"/>
<comment type="function">
    <text evidence="1">This protein is located at the 30S-50S ribosomal subunit interface and may play a role in the structure and function of the aminoacyl-tRNA binding site.</text>
</comment>
<comment type="similarity">
    <text evidence="1">Belongs to the bacterial ribosomal protein bL19 family.</text>
</comment>
<accession>B5EPC7</accession>
<gene>
    <name evidence="1" type="primary">rplS</name>
    <name type="ordered locus">Lferr_2473</name>
</gene>
<sequence>MNIIDEINQEQMQSVLPAFGAGDTVAVHVKVKEGDRERVQIFEGICIARRNRGLHSAFTVRKISNGEGVERVFPSYSPLVTKVEVKRRGDVRRAKLYYLRDLSGKAARIKEKLG</sequence>
<reference key="1">
    <citation type="submission" date="2008-08" db="EMBL/GenBank/DDBJ databases">
        <title>Complete sequence of Acidithiobacillus ferrooxidans ATCC 53993.</title>
        <authorList>
            <person name="Lucas S."/>
            <person name="Copeland A."/>
            <person name="Lapidus A."/>
            <person name="Glavina del Rio T."/>
            <person name="Dalin E."/>
            <person name="Tice H."/>
            <person name="Bruce D."/>
            <person name="Goodwin L."/>
            <person name="Pitluck S."/>
            <person name="Sims D."/>
            <person name="Brettin T."/>
            <person name="Detter J.C."/>
            <person name="Han C."/>
            <person name="Kuske C.R."/>
            <person name="Larimer F."/>
            <person name="Land M."/>
            <person name="Hauser L."/>
            <person name="Kyrpides N."/>
            <person name="Lykidis A."/>
            <person name="Borole A.P."/>
        </authorList>
    </citation>
    <scope>NUCLEOTIDE SEQUENCE [LARGE SCALE GENOMIC DNA]</scope>
    <source>
        <strain>ATCC 53993 / BNL-5-31</strain>
    </source>
</reference>
<protein>
    <recommendedName>
        <fullName evidence="1">Large ribosomal subunit protein bL19</fullName>
    </recommendedName>
    <alternativeName>
        <fullName evidence="2">50S ribosomal protein L19</fullName>
    </alternativeName>
</protein>
<feature type="chain" id="PRO_1000193773" description="Large ribosomal subunit protein bL19">
    <location>
        <begin position="1"/>
        <end position="114"/>
    </location>
</feature>
<keyword id="KW-0687">Ribonucleoprotein</keyword>
<keyword id="KW-0689">Ribosomal protein</keyword>
<name>RL19_ACIF5</name>
<organism>
    <name type="scientific">Acidithiobacillus ferrooxidans (strain ATCC 53993 / BNL-5-31)</name>
    <name type="common">Leptospirillum ferrooxidans (ATCC 53993)</name>
    <dbReference type="NCBI Taxonomy" id="380394"/>
    <lineage>
        <taxon>Bacteria</taxon>
        <taxon>Pseudomonadati</taxon>
        <taxon>Pseudomonadota</taxon>
        <taxon>Acidithiobacillia</taxon>
        <taxon>Acidithiobacillales</taxon>
        <taxon>Acidithiobacillaceae</taxon>
        <taxon>Acidithiobacillus</taxon>
    </lineage>
</organism>